<comment type="function">
    <text evidence="1">Causes loosening and extension of plant cell walls by disrupting non-covalent bonding between cellulose microfibrils and matrix glucans. No enzymatic activity has been found (By similarity).</text>
</comment>
<comment type="subcellular location">
    <subcellularLocation>
        <location>Secreted</location>
        <location>Cell wall</location>
    </subcellularLocation>
    <subcellularLocation>
        <location>Membrane</location>
        <topology>Peripheral membrane protein</topology>
    </subcellularLocation>
</comment>
<comment type="similarity">
    <text evidence="5">Belongs to the expansin family. Expansin A subfamily.</text>
</comment>
<comment type="online information" name="EXPANSIN homepage">
    <link uri="https://www.dept.psu.edu/biology/groups/expansins/index.htm"/>
</comment>
<reference key="1">
    <citation type="journal article" date="2000" name="Nature">
        <title>Sequence and analysis of chromosome 3 of the plant Arabidopsis thaliana.</title>
        <authorList>
            <person name="Salanoubat M."/>
            <person name="Lemcke K."/>
            <person name="Rieger M."/>
            <person name="Ansorge W."/>
            <person name="Unseld M."/>
            <person name="Fartmann B."/>
            <person name="Valle G."/>
            <person name="Bloecker H."/>
            <person name="Perez-Alonso M."/>
            <person name="Obermaier B."/>
            <person name="Delseny M."/>
            <person name="Boutry M."/>
            <person name="Grivell L.A."/>
            <person name="Mache R."/>
            <person name="Puigdomenech P."/>
            <person name="De Simone V."/>
            <person name="Choisne N."/>
            <person name="Artiguenave F."/>
            <person name="Robert C."/>
            <person name="Brottier P."/>
            <person name="Wincker P."/>
            <person name="Cattolico L."/>
            <person name="Weissenbach J."/>
            <person name="Saurin W."/>
            <person name="Quetier F."/>
            <person name="Schaefer M."/>
            <person name="Mueller-Auer S."/>
            <person name="Gabel C."/>
            <person name="Fuchs M."/>
            <person name="Benes V."/>
            <person name="Wurmbach E."/>
            <person name="Drzonek H."/>
            <person name="Erfle H."/>
            <person name="Jordan N."/>
            <person name="Bangert S."/>
            <person name="Wiedelmann R."/>
            <person name="Kranz H."/>
            <person name="Voss H."/>
            <person name="Holland R."/>
            <person name="Brandt P."/>
            <person name="Nyakatura G."/>
            <person name="Vezzi A."/>
            <person name="D'Angelo M."/>
            <person name="Pallavicini A."/>
            <person name="Toppo S."/>
            <person name="Simionati B."/>
            <person name="Conrad A."/>
            <person name="Hornischer K."/>
            <person name="Kauer G."/>
            <person name="Loehnert T.-H."/>
            <person name="Nordsiek G."/>
            <person name="Reichelt J."/>
            <person name="Scharfe M."/>
            <person name="Schoen O."/>
            <person name="Bargues M."/>
            <person name="Terol J."/>
            <person name="Climent J."/>
            <person name="Navarro P."/>
            <person name="Collado C."/>
            <person name="Perez-Perez A."/>
            <person name="Ottenwaelder B."/>
            <person name="Duchemin D."/>
            <person name="Cooke R."/>
            <person name="Laudie M."/>
            <person name="Berger-Llauro C."/>
            <person name="Purnelle B."/>
            <person name="Masuy D."/>
            <person name="de Haan M."/>
            <person name="Maarse A.C."/>
            <person name="Alcaraz J.-P."/>
            <person name="Cottet A."/>
            <person name="Casacuberta E."/>
            <person name="Monfort A."/>
            <person name="Argiriou A."/>
            <person name="Flores M."/>
            <person name="Liguori R."/>
            <person name="Vitale D."/>
            <person name="Mannhaupt G."/>
            <person name="Haase D."/>
            <person name="Schoof H."/>
            <person name="Rudd S."/>
            <person name="Zaccaria P."/>
            <person name="Mewes H.-W."/>
            <person name="Mayer K.F.X."/>
            <person name="Kaul S."/>
            <person name="Town C.D."/>
            <person name="Koo H.L."/>
            <person name="Tallon L.J."/>
            <person name="Jenkins J."/>
            <person name="Rooney T."/>
            <person name="Rizzo M."/>
            <person name="Walts A."/>
            <person name="Utterback T."/>
            <person name="Fujii C.Y."/>
            <person name="Shea T.P."/>
            <person name="Creasy T.H."/>
            <person name="Haas B."/>
            <person name="Maiti R."/>
            <person name="Wu D."/>
            <person name="Peterson J."/>
            <person name="Van Aken S."/>
            <person name="Pai G."/>
            <person name="Militscher J."/>
            <person name="Sellers P."/>
            <person name="Gill J.E."/>
            <person name="Feldblyum T.V."/>
            <person name="Preuss D."/>
            <person name="Lin X."/>
            <person name="Nierman W.C."/>
            <person name="Salzberg S.L."/>
            <person name="White O."/>
            <person name="Venter J.C."/>
            <person name="Fraser C.M."/>
            <person name="Kaneko T."/>
            <person name="Nakamura Y."/>
            <person name="Sato S."/>
            <person name="Kato T."/>
            <person name="Asamizu E."/>
            <person name="Sasamoto S."/>
            <person name="Kimura T."/>
            <person name="Idesawa K."/>
            <person name="Kawashima K."/>
            <person name="Kishida Y."/>
            <person name="Kiyokawa C."/>
            <person name="Kohara M."/>
            <person name="Matsumoto M."/>
            <person name="Matsuno A."/>
            <person name="Muraki A."/>
            <person name="Nakayama S."/>
            <person name="Nakazaki N."/>
            <person name="Shinpo S."/>
            <person name="Takeuchi C."/>
            <person name="Wada T."/>
            <person name="Watanabe A."/>
            <person name="Yamada M."/>
            <person name="Yasuda M."/>
            <person name="Tabata S."/>
        </authorList>
    </citation>
    <scope>NUCLEOTIDE SEQUENCE [LARGE SCALE GENOMIC DNA]</scope>
    <source>
        <strain>cv. Columbia</strain>
    </source>
</reference>
<reference key="2">
    <citation type="journal article" date="2017" name="Plant J.">
        <title>Araport11: a complete reannotation of the Arabidopsis thaliana reference genome.</title>
        <authorList>
            <person name="Cheng C.Y."/>
            <person name="Krishnakumar V."/>
            <person name="Chan A.P."/>
            <person name="Thibaud-Nissen F."/>
            <person name="Schobel S."/>
            <person name="Town C.D."/>
        </authorList>
    </citation>
    <scope>GENOME REANNOTATION</scope>
    <source>
        <strain>cv. Columbia</strain>
    </source>
</reference>
<reference key="3">
    <citation type="submission" date="2004-09" db="EMBL/GenBank/DDBJ databases">
        <title>Large-scale analysis of RIKEN Arabidopsis full-length (RAFL) cDNAs.</title>
        <authorList>
            <person name="Totoki Y."/>
            <person name="Seki M."/>
            <person name="Ishida J."/>
            <person name="Nakajima M."/>
            <person name="Enju A."/>
            <person name="Kamiya A."/>
            <person name="Narusaka M."/>
            <person name="Shin-i T."/>
            <person name="Nakagawa M."/>
            <person name="Sakamoto N."/>
            <person name="Oishi K."/>
            <person name="Kohara Y."/>
            <person name="Kobayashi M."/>
            <person name="Toyoda A."/>
            <person name="Sakaki Y."/>
            <person name="Sakurai T."/>
            <person name="Iida K."/>
            <person name="Akiyama K."/>
            <person name="Satou M."/>
            <person name="Toyoda T."/>
            <person name="Konagaya A."/>
            <person name="Carninci P."/>
            <person name="Kawai J."/>
            <person name="Hayashizaki Y."/>
            <person name="Shinozaki K."/>
        </authorList>
    </citation>
    <scope>NUCLEOTIDE SEQUENCE [LARGE SCALE MRNA]</scope>
    <source>
        <strain>cv. Columbia</strain>
    </source>
</reference>
<reference key="4">
    <citation type="journal article" date="2004" name="Plant Mol. Biol.">
        <title>Nomenclature for members of the expansin superfamily of genes and proteins.</title>
        <authorList>
            <person name="Kende H."/>
            <person name="Bradford K.J."/>
            <person name="Brummell D.A."/>
            <person name="Cho H.-T."/>
            <person name="Cosgrove D.J."/>
            <person name="Fleming A.J."/>
            <person name="Gehring C."/>
            <person name="Lee Y."/>
            <person name="McQueen-Mason S.J."/>
            <person name="Rose J.K.C."/>
            <person name="Voesenek L.A.C."/>
        </authorList>
    </citation>
    <scope>NOMENCLATURE</scope>
</reference>
<protein>
    <recommendedName>
        <fullName>Expansin-A16</fullName>
        <shortName>AtEXPA16</shortName>
    </recommendedName>
    <alternativeName>
        <fullName>Alpha-expansin-16</fullName>
        <shortName>At-EXP16</shortName>
        <shortName>AtEx16</shortName>
    </alternativeName>
    <alternativeName>
        <fullName>Ath-ExpAlpha-1.7</fullName>
    </alternativeName>
</protein>
<keyword id="KW-0134">Cell wall</keyword>
<keyword id="KW-0961">Cell wall biogenesis/degradation</keyword>
<keyword id="KW-0472">Membrane</keyword>
<keyword id="KW-1185">Reference proteome</keyword>
<keyword id="KW-0964">Secreted</keyword>
<keyword id="KW-0732">Signal</keyword>
<sequence>MAINPLILLTIFPLFLLLSFTDAGIPRVFSGGSWQTAHATFYGGNDASGTMGGACGYGNLYSQGYGTNTAALSTSLFNSGQSCGACFEIKCVNDPKWCHPGNPSVFVTATNFCPPNLAQPSDNGGWCNPPRSHFDLAMPVFLKIAEYRAGIVPISYRRVACRKSGGIRFTINGHRYFNLVLITNVAGAGDIARTSVKGSKTGWMSLTRNWGQNWQSNAVLVGQSLSFRVTSSDRRTSTSWNIAPSNWQFGQTFVGKNFRV</sequence>
<name>EXP16_ARATH</name>
<evidence type="ECO:0000250" key="1"/>
<evidence type="ECO:0000255" key="2"/>
<evidence type="ECO:0000255" key="3">
    <source>
        <dbReference type="PROSITE-ProRule" id="PRU00078"/>
    </source>
</evidence>
<evidence type="ECO:0000255" key="4">
    <source>
        <dbReference type="PROSITE-ProRule" id="PRU00079"/>
    </source>
</evidence>
<evidence type="ECO:0000305" key="5"/>
<gene>
    <name type="primary">EXPA16</name>
    <name type="synonym">EXP16</name>
    <name type="ordered locus">At3g55500</name>
    <name type="ORF">T22E16.160</name>
</gene>
<organism>
    <name type="scientific">Arabidopsis thaliana</name>
    <name type="common">Mouse-ear cress</name>
    <dbReference type="NCBI Taxonomy" id="3702"/>
    <lineage>
        <taxon>Eukaryota</taxon>
        <taxon>Viridiplantae</taxon>
        <taxon>Streptophyta</taxon>
        <taxon>Embryophyta</taxon>
        <taxon>Tracheophyta</taxon>
        <taxon>Spermatophyta</taxon>
        <taxon>Magnoliopsida</taxon>
        <taxon>eudicotyledons</taxon>
        <taxon>Gunneridae</taxon>
        <taxon>Pentapetalae</taxon>
        <taxon>rosids</taxon>
        <taxon>malvids</taxon>
        <taxon>Brassicales</taxon>
        <taxon>Brassicaceae</taxon>
        <taxon>Camelineae</taxon>
        <taxon>Arabidopsis</taxon>
    </lineage>
</organism>
<dbReference type="EMBL" id="AL132975">
    <property type="protein sequence ID" value="CAB75908.1"/>
    <property type="molecule type" value="Genomic_DNA"/>
</dbReference>
<dbReference type="EMBL" id="CP002686">
    <property type="protein sequence ID" value="AEE79393.1"/>
    <property type="molecule type" value="Genomic_DNA"/>
</dbReference>
<dbReference type="EMBL" id="AK175875">
    <property type="protein sequence ID" value="BAD43638.1"/>
    <property type="molecule type" value="mRNA"/>
</dbReference>
<dbReference type="PIR" id="T47689">
    <property type="entry name" value="T47689"/>
</dbReference>
<dbReference type="RefSeq" id="NP_191109.1">
    <property type="nucleotide sequence ID" value="NM_115407.4"/>
</dbReference>
<dbReference type="SMR" id="Q9M2S9"/>
<dbReference type="STRING" id="3702.Q9M2S9"/>
<dbReference type="PaxDb" id="3702-AT3G55500.1"/>
<dbReference type="ProteomicsDB" id="222242"/>
<dbReference type="EnsemblPlants" id="AT3G55500.1">
    <property type="protein sequence ID" value="AT3G55500.1"/>
    <property type="gene ID" value="AT3G55500"/>
</dbReference>
<dbReference type="GeneID" id="824715"/>
<dbReference type="Gramene" id="AT3G55500.1">
    <property type="protein sequence ID" value="AT3G55500.1"/>
    <property type="gene ID" value="AT3G55500"/>
</dbReference>
<dbReference type="KEGG" id="ath:AT3G55500"/>
<dbReference type="Araport" id="AT3G55500"/>
<dbReference type="TAIR" id="AT3G55500">
    <property type="gene designation" value="EXPA16"/>
</dbReference>
<dbReference type="eggNOG" id="ENOG502QR06">
    <property type="taxonomic scope" value="Eukaryota"/>
</dbReference>
<dbReference type="HOGENOM" id="CLU_027462_0_1_1"/>
<dbReference type="InParanoid" id="Q9M2S9"/>
<dbReference type="OMA" id="TWMVEAR"/>
<dbReference type="PhylomeDB" id="Q9M2S9"/>
<dbReference type="PRO" id="PR:Q9M2S9"/>
<dbReference type="Proteomes" id="UP000006548">
    <property type="component" value="Chromosome 3"/>
</dbReference>
<dbReference type="ExpressionAtlas" id="Q9M2S9">
    <property type="expression patterns" value="baseline and differential"/>
</dbReference>
<dbReference type="GO" id="GO:0005576">
    <property type="term" value="C:extracellular region"/>
    <property type="evidence" value="ECO:0007669"/>
    <property type="project" value="UniProtKB-KW"/>
</dbReference>
<dbReference type="GO" id="GO:0016020">
    <property type="term" value="C:membrane"/>
    <property type="evidence" value="ECO:0007669"/>
    <property type="project" value="UniProtKB-SubCell"/>
</dbReference>
<dbReference type="GO" id="GO:0009828">
    <property type="term" value="P:plant-type cell wall loosening"/>
    <property type="evidence" value="ECO:0000250"/>
    <property type="project" value="UniProtKB"/>
</dbReference>
<dbReference type="GO" id="GO:0006949">
    <property type="term" value="P:syncytium formation"/>
    <property type="evidence" value="ECO:0000270"/>
    <property type="project" value="TAIR"/>
</dbReference>
<dbReference type="CDD" id="cd22274">
    <property type="entry name" value="DPBB_EXPA_N"/>
    <property type="match status" value="1"/>
</dbReference>
<dbReference type="FunFam" id="2.40.40.10:FF:000001">
    <property type="entry name" value="Expansin"/>
    <property type="match status" value="1"/>
</dbReference>
<dbReference type="FunFam" id="2.60.40.760:FF:000001">
    <property type="entry name" value="Expansin"/>
    <property type="match status" value="1"/>
</dbReference>
<dbReference type="Gene3D" id="2.60.40.760">
    <property type="entry name" value="Expansin, cellulose-binding-like domain"/>
    <property type="match status" value="1"/>
</dbReference>
<dbReference type="Gene3D" id="2.40.40.10">
    <property type="entry name" value="RlpA-like domain"/>
    <property type="match status" value="1"/>
</dbReference>
<dbReference type="InterPro" id="IPR007118">
    <property type="entry name" value="Expan_Lol_pI"/>
</dbReference>
<dbReference type="InterPro" id="IPR002963">
    <property type="entry name" value="Expansin"/>
</dbReference>
<dbReference type="InterPro" id="IPR007112">
    <property type="entry name" value="Expansin/allergen_DPBB_dom"/>
</dbReference>
<dbReference type="InterPro" id="IPR007117">
    <property type="entry name" value="Expansin_CBD"/>
</dbReference>
<dbReference type="InterPro" id="IPR036749">
    <property type="entry name" value="Expansin_CBD_sf"/>
</dbReference>
<dbReference type="InterPro" id="IPR009009">
    <property type="entry name" value="RlpA-like_DPBB"/>
</dbReference>
<dbReference type="InterPro" id="IPR036908">
    <property type="entry name" value="RlpA-like_sf"/>
</dbReference>
<dbReference type="PANTHER" id="PTHR31867">
    <property type="entry name" value="EXPANSIN-A15"/>
    <property type="match status" value="1"/>
</dbReference>
<dbReference type="Pfam" id="PF03330">
    <property type="entry name" value="DPBB_1"/>
    <property type="match status" value="1"/>
</dbReference>
<dbReference type="Pfam" id="PF01357">
    <property type="entry name" value="Expansin_C"/>
    <property type="match status" value="1"/>
</dbReference>
<dbReference type="PRINTS" id="PR01226">
    <property type="entry name" value="EXPANSIN"/>
</dbReference>
<dbReference type="PRINTS" id="PR01225">
    <property type="entry name" value="EXPANSNFAMLY"/>
</dbReference>
<dbReference type="SMART" id="SM00837">
    <property type="entry name" value="DPBB_1"/>
    <property type="match status" value="1"/>
</dbReference>
<dbReference type="SUPFAM" id="SSF50685">
    <property type="entry name" value="Barwin-like endoglucanases"/>
    <property type="match status" value="1"/>
</dbReference>
<dbReference type="SUPFAM" id="SSF49590">
    <property type="entry name" value="PHL pollen allergen"/>
    <property type="match status" value="1"/>
</dbReference>
<dbReference type="PROSITE" id="PS50843">
    <property type="entry name" value="EXPANSIN_CBD"/>
    <property type="match status" value="1"/>
</dbReference>
<dbReference type="PROSITE" id="PS50842">
    <property type="entry name" value="EXPANSIN_EG45"/>
    <property type="match status" value="1"/>
</dbReference>
<feature type="signal peptide" evidence="2">
    <location>
        <begin position="1"/>
        <end position="23"/>
    </location>
</feature>
<feature type="chain" id="PRO_0000008697" description="Expansin-A16">
    <location>
        <begin position="24"/>
        <end position="260"/>
    </location>
</feature>
<feature type="domain" description="Expansin-like EG45" evidence="4">
    <location>
        <begin position="52"/>
        <end position="166"/>
    </location>
</feature>
<feature type="domain" description="Expansin-like CBD" evidence="3">
    <location>
        <begin position="176"/>
        <end position="255"/>
    </location>
</feature>
<proteinExistence type="evidence at transcript level"/>
<accession>Q9M2S9</accession>
<accession>Q680J2</accession>